<organism>
    <name type="scientific">Homo sapiens</name>
    <name type="common">Human</name>
    <dbReference type="NCBI Taxonomy" id="9606"/>
    <lineage>
        <taxon>Eukaryota</taxon>
        <taxon>Metazoa</taxon>
        <taxon>Chordata</taxon>
        <taxon>Craniata</taxon>
        <taxon>Vertebrata</taxon>
        <taxon>Euteleostomi</taxon>
        <taxon>Mammalia</taxon>
        <taxon>Eutheria</taxon>
        <taxon>Euarchontoglires</taxon>
        <taxon>Primates</taxon>
        <taxon>Haplorrhini</taxon>
        <taxon>Catarrhini</taxon>
        <taxon>Hominidae</taxon>
        <taxon>Homo</taxon>
    </lineage>
</organism>
<protein>
    <recommendedName>
        <fullName evidence="9">Divergent protein kinase domain 2B</fullName>
    </recommendedName>
    <alternativeName>
        <fullName evidence="8">Deleted in autism-related protein 1</fullName>
    </alternativeName>
</protein>
<evidence type="ECO:0000255" key="1"/>
<evidence type="ECO:0000269" key="2">
    <source>
    </source>
</evidence>
<evidence type="ECO:0000269" key="3">
    <source>
    </source>
</evidence>
<evidence type="ECO:0000269" key="4">
    <source>
    </source>
</evidence>
<evidence type="ECO:0000303" key="5">
    <source>
    </source>
</evidence>
<evidence type="ECO:0000303" key="6">
    <source>
    </source>
</evidence>
<evidence type="ECO:0000303" key="7">
    <source>
    </source>
</evidence>
<evidence type="ECO:0000303" key="8">
    <source>
    </source>
</evidence>
<evidence type="ECO:0000305" key="9"/>
<evidence type="ECO:0000312" key="10">
    <source>
        <dbReference type="HGNC" id="HGNC:25866"/>
    </source>
</evidence>
<accession>Q9H7Y0</accession>
<accession>A8MUU5</accession>
<accession>B2RPN7</accession>
<accession>Q6UWJ5</accession>
<feature type="signal peptide" evidence="1">
    <location>
        <begin position="1"/>
        <end position="31"/>
    </location>
</feature>
<feature type="chain" id="PRO_0000019568" description="Divergent protein kinase domain 2B">
    <location>
        <begin position="32"/>
        <end position="433"/>
    </location>
</feature>
<feature type="glycosylation site" description="N-linked (GlcNAc...) asparagine" evidence="1">
    <location>
        <position position="100"/>
    </location>
</feature>
<feature type="splice variant" id="VSP_035633" description="In isoform 2." evidence="5 6 7">
    <original>GLASPLLRCPSQRLLD</original>
    <variation>DCHQGQRELKFLCMLR</variation>
    <location>
        <begin position="167"/>
        <end position="182"/>
    </location>
</feature>
<feature type="splice variant" id="VSP_035634" description="In isoform 2." evidence="5 6 7">
    <location>
        <begin position="183"/>
        <end position="433"/>
    </location>
</feature>
<feature type="sequence variant" id="VAR_047103" description="In dbSNP:rs1132201." evidence="2 3">
    <original>R</original>
    <variation>K</variation>
    <location>
        <position position="128"/>
    </location>
</feature>
<feature type="sequence variant" id="VAR_047104" description="In dbSNP:rs9969.">
    <original>R</original>
    <variation>Q</variation>
    <location>
        <position position="146"/>
    </location>
</feature>
<reference key="1">
    <citation type="journal article" date="2003" name="Genome Res.">
        <title>The secreted protein discovery initiative (SPDI), a large-scale effort to identify novel human secreted and transmembrane proteins: a bioinformatics assessment.</title>
        <authorList>
            <person name="Clark H.F."/>
            <person name="Gurney A.L."/>
            <person name="Abaya E."/>
            <person name="Baker K."/>
            <person name="Baldwin D.T."/>
            <person name="Brush J."/>
            <person name="Chen J."/>
            <person name="Chow B."/>
            <person name="Chui C."/>
            <person name="Crowley C."/>
            <person name="Currell B."/>
            <person name="Deuel B."/>
            <person name="Dowd P."/>
            <person name="Eaton D."/>
            <person name="Foster J.S."/>
            <person name="Grimaldi C."/>
            <person name="Gu Q."/>
            <person name="Hass P.E."/>
            <person name="Heldens S."/>
            <person name="Huang A."/>
            <person name="Kim H.S."/>
            <person name="Klimowski L."/>
            <person name="Jin Y."/>
            <person name="Johnson S."/>
            <person name="Lee J."/>
            <person name="Lewis L."/>
            <person name="Liao D."/>
            <person name="Mark M.R."/>
            <person name="Robbie E."/>
            <person name="Sanchez C."/>
            <person name="Schoenfeld J."/>
            <person name="Seshagiri S."/>
            <person name="Simmons L."/>
            <person name="Singh J."/>
            <person name="Smith V."/>
            <person name="Stinson J."/>
            <person name="Vagts A."/>
            <person name="Vandlen R.L."/>
            <person name="Watanabe C."/>
            <person name="Wieand D."/>
            <person name="Woods K."/>
            <person name="Xie M.-H."/>
            <person name="Yansura D.G."/>
            <person name="Yi S."/>
            <person name="Yu G."/>
            <person name="Yuan J."/>
            <person name="Zhang M."/>
            <person name="Zhang Z."/>
            <person name="Goddard A.D."/>
            <person name="Wood W.I."/>
            <person name="Godowski P.J."/>
            <person name="Gray A.M."/>
        </authorList>
    </citation>
    <scope>NUCLEOTIDE SEQUENCE [LARGE SCALE MRNA] (ISOFORM 2)</scope>
</reference>
<reference key="2">
    <citation type="journal article" date="2004" name="Nat. Genet.">
        <title>Complete sequencing and characterization of 21,243 full-length human cDNAs.</title>
        <authorList>
            <person name="Ota T."/>
            <person name="Suzuki Y."/>
            <person name="Nishikawa T."/>
            <person name="Otsuki T."/>
            <person name="Sugiyama T."/>
            <person name="Irie R."/>
            <person name="Wakamatsu A."/>
            <person name="Hayashi K."/>
            <person name="Sato H."/>
            <person name="Nagai K."/>
            <person name="Kimura K."/>
            <person name="Makita H."/>
            <person name="Sekine M."/>
            <person name="Obayashi M."/>
            <person name="Nishi T."/>
            <person name="Shibahara T."/>
            <person name="Tanaka T."/>
            <person name="Ishii S."/>
            <person name="Yamamoto J."/>
            <person name="Saito K."/>
            <person name="Kawai Y."/>
            <person name="Isono Y."/>
            <person name="Nakamura Y."/>
            <person name="Nagahari K."/>
            <person name="Murakami K."/>
            <person name="Yasuda T."/>
            <person name="Iwayanagi T."/>
            <person name="Wagatsuma M."/>
            <person name="Shiratori A."/>
            <person name="Sudo H."/>
            <person name="Hosoiri T."/>
            <person name="Kaku Y."/>
            <person name="Kodaira H."/>
            <person name="Kondo H."/>
            <person name="Sugawara M."/>
            <person name="Takahashi M."/>
            <person name="Kanda K."/>
            <person name="Yokoi T."/>
            <person name="Furuya T."/>
            <person name="Kikkawa E."/>
            <person name="Omura Y."/>
            <person name="Abe K."/>
            <person name="Kamihara K."/>
            <person name="Katsuta N."/>
            <person name="Sato K."/>
            <person name="Tanikawa M."/>
            <person name="Yamazaki M."/>
            <person name="Ninomiya K."/>
            <person name="Ishibashi T."/>
            <person name="Yamashita H."/>
            <person name="Murakawa K."/>
            <person name="Fujimori K."/>
            <person name="Tanai H."/>
            <person name="Kimata M."/>
            <person name="Watanabe M."/>
            <person name="Hiraoka S."/>
            <person name="Chiba Y."/>
            <person name="Ishida S."/>
            <person name="Ono Y."/>
            <person name="Takiguchi S."/>
            <person name="Watanabe S."/>
            <person name="Yosida M."/>
            <person name="Hotuta T."/>
            <person name="Kusano J."/>
            <person name="Kanehori K."/>
            <person name="Takahashi-Fujii A."/>
            <person name="Hara H."/>
            <person name="Tanase T.-O."/>
            <person name="Nomura Y."/>
            <person name="Togiya S."/>
            <person name="Komai F."/>
            <person name="Hara R."/>
            <person name="Takeuchi K."/>
            <person name="Arita M."/>
            <person name="Imose N."/>
            <person name="Musashino K."/>
            <person name="Yuuki H."/>
            <person name="Oshima A."/>
            <person name="Sasaki N."/>
            <person name="Aotsuka S."/>
            <person name="Yoshikawa Y."/>
            <person name="Matsunawa H."/>
            <person name="Ichihara T."/>
            <person name="Shiohata N."/>
            <person name="Sano S."/>
            <person name="Moriya S."/>
            <person name="Momiyama H."/>
            <person name="Satoh N."/>
            <person name="Takami S."/>
            <person name="Terashima Y."/>
            <person name="Suzuki O."/>
            <person name="Nakagawa S."/>
            <person name="Senoh A."/>
            <person name="Mizoguchi H."/>
            <person name="Goto Y."/>
            <person name="Shimizu F."/>
            <person name="Wakebe H."/>
            <person name="Hishigaki H."/>
            <person name="Watanabe T."/>
            <person name="Sugiyama A."/>
            <person name="Takemoto M."/>
            <person name="Kawakami B."/>
            <person name="Yamazaki M."/>
            <person name="Watanabe K."/>
            <person name="Kumagai A."/>
            <person name="Itakura S."/>
            <person name="Fukuzumi Y."/>
            <person name="Fujimori Y."/>
            <person name="Komiyama M."/>
            <person name="Tashiro H."/>
            <person name="Tanigami A."/>
            <person name="Fujiwara T."/>
            <person name="Ono T."/>
            <person name="Yamada K."/>
            <person name="Fujii Y."/>
            <person name="Ozaki K."/>
            <person name="Hirao M."/>
            <person name="Ohmori Y."/>
            <person name="Kawabata A."/>
            <person name="Hikiji T."/>
            <person name="Kobatake N."/>
            <person name="Inagaki H."/>
            <person name="Ikema Y."/>
            <person name="Okamoto S."/>
            <person name="Okitani R."/>
            <person name="Kawakami T."/>
            <person name="Noguchi S."/>
            <person name="Itoh T."/>
            <person name="Shigeta K."/>
            <person name="Senba T."/>
            <person name="Matsumura K."/>
            <person name="Nakajima Y."/>
            <person name="Mizuno T."/>
            <person name="Morinaga M."/>
            <person name="Sasaki M."/>
            <person name="Togashi T."/>
            <person name="Oyama M."/>
            <person name="Hata H."/>
            <person name="Watanabe M."/>
            <person name="Komatsu T."/>
            <person name="Mizushima-Sugano J."/>
            <person name="Satoh T."/>
            <person name="Shirai Y."/>
            <person name="Takahashi Y."/>
            <person name="Nakagawa K."/>
            <person name="Okumura K."/>
            <person name="Nagase T."/>
            <person name="Nomura N."/>
            <person name="Kikuchi H."/>
            <person name="Masuho Y."/>
            <person name="Yamashita R."/>
            <person name="Nakai K."/>
            <person name="Yada T."/>
            <person name="Nakamura Y."/>
            <person name="Ohara O."/>
            <person name="Isogai T."/>
            <person name="Sugano S."/>
        </authorList>
    </citation>
    <scope>NUCLEOTIDE SEQUENCE [LARGE SCALE MRNA] (ISOFORM 2)</scope>
    <scope>VARIANT LYS-128</scope>
    <source>
        <tissue>Mammary gland</tissue>
    </source>
</reference>
<reference key="3">
    <citation type="journal article" date="2005" name="Nature">
        <title>The DNA sequence of the human X chromosome.</title>
        <authorList>
            <person name="Ross M.T."/>
            <person name="Grafham D.V."/>
            <person name="Coffey A.J."/>
            <person name="Scherer S."/>
            <person name="McLay K."/>
            <person name="Muzny D."/>
            <person name="Platzer M."/>
            <person name="Howell G.R."/>
            <person name="Burrows C."/>
            <person name="Bird C.P."/>
            <person name="Frankish A."/>
            <person name="Lovell F.L."/>
            <person name="Howe K.L."/>
            <person name="Ashurst J.L."/>
            <person name="Fulton R.S."/>
            <person name="Sudbrak R."/>
            <person name="Wen G."/>
            <person name="Jones M.C."/>
            <person name="Hurles M.E."/>
            <person name="Andrews T.D."/>
            <person name="Scott C.E."/>
            <person name="Searle S."/>
            <person name="Ramser J."/>
            <person name="Whittaker A."/>
            <person name="Deadman R."/>
            <person name="Carter N.P."/>
            <person name="Hunt S.E."/>
            <person name="Chen R."/>
            <person name="Cree A."/>
            <person name="Gunaratne P."/>
            <person name="Havlak P."/>
            <person name="Hodgson A."/>
            <person name="Metzker M.L."/>
            <person name="Richards S."/>
            <person name="Scott G."/>
            <person name="Steffen D."/>
            <person name="Sodergren E."/>
            <person name="Wheeler D.A."/>
            <person name="Worley K.C."/>
            <person name="Ainscough R."/>
            <person name="Ambrose K.D."/>
            <person name="Ansari-Lari M.A."/>
            <person name="Aradhya S."/>
            <person name="Ashwell R.I."/>
            <person name="Babbage A.K."/>
            <person name="Bagguley C.L."/>
            <person name="Ballabio A."/>
            <person name="Banerjee R."/>
            <person name="Barker G.E."/>
            <person name="Barlow K.F."/>
            <person name="Barrett I.P."/>
            <person name="Bates K.N."/>
            <person name="Beare D.M."/>
            <person name="Beasley H."/>
            <person name="Beasley O."/>
            <person name="Beck A."/>
            <person name="Bethel G."/>
            <person name="Blechschmidt K."/>
            <person name="Brady N."/>
            <person name="Bray-Allen S."/>
            <person name="Bridgeman A.M."/>
            <person name="Brown A.J."/>
            <person name="Brown M.J."/>
            <person name="Bonnin D."/>
            <person name="Bruford E.A."/>
            <person name="Buhay C."/>
            <person name="Burch P."/>
            <person name="Burford D."/>
            <person name="Burgess J."/>
            <person name="Burrill W."/>
            <person name="Burton J."/>
            <person name="Bye J.M."/>
            <person name="Carder C."/>
            <person name="Carrel L."/>
            <person name="Chako J."/>
            <person name="Chapman J.C."/>
            <person name="Chavez D."/>
            <person name="Chen E."/>
            <person name="Chen G."/>
            <person name="Chen Y."/>
            <person name="Chen Z."/>
            <person name="Chinault C."/>
            <person name="Ciccodicola A."/>
            <person name="Clark S.Y."/>
            <person name="Clarke G."/>
            <person name="Clee C.M."/>
            <person name="Clegg S."/>
            <person name="Clerc-Blankenburg K."/>
            <person name="Clifford K."/>
            <person name="Cobley V."/>
            <person name="Cole C.G."/>
            <person name="Conquer J.S."/>
            <person name="Corby N."/>
            <person name="Connor R.E."/>
            <person name="David R."/>
            <person name="Davies J."/>
            <person name="Davis C."/>
            <person name="Davis J."/>
            <person name="Delgado O."/>
            <person name="Deshazo D."/>
            <person name="Dhami P."/>
            <person name="Ding Y."/>
            <person name="Dinh H."/>
            <person name="Dodsworth S."/>
            <person name="Draper H."/>
            <person name="Dugan-Rocha S."/>
            <person name="Dunham A."/>
            <person name="Dunn M."/>
            <person name="Durbin K.J."/>
            <person name="Dutta I."/>
            <person name="Eades T."/>
            <person name="Ellwood M."/>
            <person name="Emery-Cohen A."/>
            <person name="Errington H."/>
            <person name="Evans K.L."/>
            <person name="Faulkner L."/>
            <person name="Francis F."/>
            <person name="Frankland J."/>
            <person name="Fraser A.E."/>
            <person name="Galgoczy P."/>
            <person name="Gilbert J."/>
            <person name="Gill R."/>
            <person name="Gloeckner G."/>
            <person name="Gregory S.G."/>
            <person name="Gribble S."/>
            <person name="Griffiths C."/>
            <person name="Grocock R."/>
            <person name="Gu Y."/>
            <person name="Gwilliam R."/>
            <person name="Hamilton C."/>
            <person name="Hart E.A."/>
            <person name="Hawes A."/>
            <person name="Heath P.D."/>
            <person name="Heitmann K."/>
            <person name="Hennig S."/>
            <person name="Hernandez J."/>
            <person name="Hinzmann B."/>
            <person name="Ho S."/>
            <person name="Hoffs M."/>
            <person name="Howden P.J."/>
            <person name="Huckle E.J."/>
            <person name="Hume J."/>
            <person name="Hunt P.J."/>
            <person name="Hunt A.R."/>
            <person name="Isherwood J."/>
            <person name="Jacob L."/>
            <person name="Johnson D."/>
            <person name="Jones S."/>
            <person name="de Jong P.J."/>
            <person name="Joseph S.S."/>
            <person name="Keenan S."/>
            <person name="Kelly S."/>
            <person name="Kershaw J.K."/>
            <person name="Khan Z."/>
            <person name="Kioschis P."/>
            <person name="Klages S."/>
            <person name="Knights A.J."/>
            <person name="Kosiura A."/>
            <person name="Kovar-Smith C."/>
            <person name="Laird G.K."/>
            <person name="Langford C."/>
            <person name="Lawlor S."/>
            <person name="Leversha M."/>
            <person name="Lewis L."/>
            <person name="Liu W."/>
            <person name="Lloyd C."/>
            <person name="Lloyd D.M."/>
            <person name="Loulseged H."/>
            <person name="Loveland J.E."/>
            <person name="Lovell J.D."/>
            <person name="Lozado R."/>
            <person name="Lu J."/>
            <person name="Lyne R."/>
            <person name="Ma J."/>
            <person name="Maheshwari M."/>
            <person name="Matthews L.H."/>
            <person name="McDowall J."/>
            <person name="McLaren S."/>
            <person name="McMurray A."/>
            <person name="Meidl P."/>
            <person name="Meitinger T."/>
            <person name="Milne S."/>
            <person name="Miner G."/>
            <person name="Mistry S.L."/>
            <person name="Morgan M."/>
            <person name="Morris S."/>
            <person name="Mueller I."/>
            <person name="Mullikin J.C."/>
            <person name="Nguyen N."/>
            <person name="Nordsiek G."/>
            <person name="Nyakatura G."/>
            <person name="O'dell C.N."/>
            <person name="Okwuonu G."/>
            <person name="Palmer S."/>
            <person name="Pandian R."/>
            <person name="Parker D."/>
            <person name="Parrish J."/>
            <person name="Pasternak S."/>
            <person name="Patel D."/>
            <person name="Pearce A.V."/>
            <person name="Pearson D.M."/>
            <person name="Pelan S.E."/>
            <person name="Perez L."/>
            <person name="Porter K.M."/>
            <person name="Ramsey Y."/>
            <person name="Reichwald K."/>
            <person name="Rhodes S."/>
            <person name="Ridler K.A."/>
            <person name="Schlessinger D."/>
            <person name="Schueler M.G."/>
            <person name="Sehra H.K."/>
            <person name="Shaw-Smith C."/>
            <person name="Shen H."/>
            <person name="Sheridan E.M."/>
            <person name="Shownkeen R."/>
            <person name="Skuce C.D."/>
            <person name="Smith M.L."/>
            <person name="Sotheran E.C."/>
            <person name="Steingruber H.E."/>
            <person name="Steward C.A."/>
            <person name="Storey R."/>
            <person name="Swann R.M."/>
            <person name="Swarbreck D."/>
            <person name="Tabor P.E."/>
            <person name="Taudien S."/>
            <person name="Taylor T."/>
            <person name="Teague B."/>
            <person name="Thomas K."/>
            <person name="Thorpe A."/>
            <person name="Timms K."/>
            <person name="Tracey A."/>
            <person name="Trevanion S."/>
            <person name="Tromans A.C."/>
            <person name="d'Urso M."/>
            <person name="Verduzco D."/>
            <person name="Villasana D."/>
            <person name="Waldron L."/>
            <person name="Wall M."/>
            <person name="Wang Q."/>
            <person name="Warren J."/>
            <person name="Warry G.L."/>
            <person name="Wei X."/>
            <person name="West A."/>
            <person name="Whitehead S.L."/>
            <person name="Whiteley M.N."/>
            <person name="Wilkinson J.E."/>
            <person name="Willey D.L."/>
            <person name="Williams G."/>
            <person name="Williams L."/>
            <person name="Williamson A."/>
            <person name="Williamson H."/>
            <person name="Wilming L."/>
            <person name="Woodmansey R.L."/>
            <person name="Wray P.W."/>
            <person name="Yen J."/>
            <person name="Zhang J."/>
            <person name="Zhou J."/>
            <person name="Zoghbi H."/>
            <person name="Zorilla S."/>
            <person name="Buck D."/>
            <person name="Reinhardt R."/>
            <person name="Poustka A."/>
            <person name="Rosenthal A."/>
            <person name="Lehrach H."/>
            <person name="Meindl A."/>
            <person name="Minx P.J."/>
            <person name="Hillier L.W."/>
            <person name="Willard H.F."/>
            <person name="Wilson R.K."/>
            <person name="Waterston R.H."/>
            <person name="Rice C.M."/>
            <person name="Vaudin M."/>
            <person name="Coulson A."/>
            <person name="Nelson D.L."/>
            <person name="Weinstock G."/>
            <person name="Sulston J.E."/>
            <person name="Durbin R.M."/>
            <person name="Hubbard T."/>
            <person name="Gibbs R.A."/>
            <person name="Beck S."/>
            <person name="Rogers J."/>
            <person name="Bentley D.R."/>
        </authorList>
    </citation>
    <scope>NUCLEOTIDE SEQUENCE [LARGE SCALE GENOMIC DNA]</scope>
</reference>
<reference key="4">
    <citation type="journal article" date="2004" name="Genome Res.">
        <title>The status, quality, and expansion of the NIH full-length cDNA project: the Mammalian Gene Collection (MGC).</title>
        <authorList>
            <consortium name="The MGC Project Team"/>
        </authorList>
    </citation>
    <scope>NUCLEOTIDE SEQUENCE [LARGE SCALE MRNA] (ISOFORM 2)</scope>
    <scope>VARIANT LYS-128</scope>
</reference>
<reference key="5">
    <citation type="journal article" date="2011" name="PLoS ONE">
        <title>DIA1R is an X-linked gene related to Deleted In Autism-1.</title>
        <authorList>
            <person name="Aziz A."/>
            <person name="Harrop S.P."/>
            <person name="Bishop N.E."/>
        </authorList>
    </citation>
    <scope>POSSIBLE INVOLVEMENT IN SUSCEPTIBILITY TO AUTISM</scope>
</reference>
<gene>
    <name evidence="10" type="primary">DIPK2B</name>
    <name type="synonym">CXorf36</name>
    <name evidence="8" type="synonym">DIA1R</name>
    <name type="ORF">UNQ1862/PRO3743</name>
</gene>
<name>DIK2B_HUMAN</name>
<keyword id="KW-0025">Alternative splicing</keyword>
<keyword id="KW-1269">Autism</keyword>
<keyword id="KW-1268">Autism spectrum disorder</keyword>
<keyword id="KW-0325">Glycoprotein</keyword>
<keyword id="KW-1267">Proteomics identification</keyword>
<keyword id="KW-1185">Reference proteome</keyword>
<keyword id="KW-0964">Secreted</keyword>
<keyword id="KW-0732">Signal</keyword>
<dbReference type="EMBL" id="AY358764">
    <property type="protein sequence ID" value="AAQ89124.1"/>
    <property type="molecule type" value="mRNA"/>
</dbReference>
<dbReference type="EMBL" id="AK024165">
    <property type="protein sequence ID" value="BAB14843.1"/>
    <property type="molecule type" value="mRNA"/>
</dbReference>
<dbReference type="EMBL" id="AC136488">
    <property type="status" value="NOT_ANNOTATED_CDS"/>
    <property type="molecule type" value="Genomic_DNA"/>
</dbReference>
<dbReference type="EMBL" id="BC137528">
    <property type="protein sequence ID" value="AAI37529.1"/>
    <property type="molecule type" value="mRNA"/>
</dbReference>
<dbReference type="EMBL" id="BC137529">
    <property type="protein sequence ID" value="AAI37530.1"/>
    <property type="molecule type" value="mRNA"/>
</dbReference>
<dbReference type="CCDS" id="CCDS14266.1">
    <molecule id="Q9H7Y0-2"/>
</dbReference>
<dbReference type="CCDS" id="CCDS48096.1">
    <molecule id="Q9H7Y0-1"/>
</dbReference>
<dbReference type="RefSeq" id="NP_078965.2">
    <molecule id="Q9H7Y0-2"/>
    <property type="nucleotide sequence ID" value="NM_024689.3"/>
</dbReference>
<dbReference type="RefSeq" id="NP_789789.2">
    <molecule id="Q9H7Y0-1"/>
    <property type="nucleotide sequence ID" value="NM_176819.3"/>
</dbReference>
<dbReference type="BioGRID" id="122855">
    <property type="interactions" value="2"/>
</dbReference>
<dbReference type="STRING" id="9606.ENSP00000381086"/>
<dbReference type="GlyCosmos" id="Q9H7Y0">
    <property type="glycosylation" value="1 site, No reported glycans"/>
</dbReference>
<dbReference type="GlyGen" id="Q9H7Y0">
    <property type="glycosylation" value="1 site"/>
</dbReference>
<dbReference type="iPTMnet" id="Q9H7Y0"/>
<dbReference type="PhosphoSitePlus" id="Q9H7Y0"/>
<dbReference type="BioMuta" id="CXorf36"/>
<dbReference type="DMDM" id="212276509"/>
<dbReference type="MassIVE" id="Q9H7Y0"/>
<dbReference type="PaxDb" id="9606-ENSP00000381086"/>
<dbReference type="PeptideAtlas" id="Q9H7Y0"/>
<dbReference type="ProteomicsDB" id="81157">
    <molecule id="Q9H7Y0-1"/>
</dbReference>
<dbReference type="ProteomicsDB" id="81158">
    <molecule id="Q9H7Y0-2"/>
</dbReference>
<dbReference type="TopDownProteomics" id="Q9H7Y0-1">
    <molecule id="Q9H7Y0-1"/>
</dbReference>
<dbReference type="Antibodypedia" id="455">
    <property type="antibodies" value="105 antibodies from 16 providers"/>
</dbReference>
<dbReference type="DNASU" id="79742"/>
<dbReference type="Ensembl" id="ENST00000377934.4">
    <molecule id="Q9H7Y0-2"/>
    <property type="protein sequence ID" value="ENSP00000367168.4"/>
    <property type="gene ID" value="ENSG00000147113.17"/>
</dbReference>
<dbReference type="Ensembl" id="ENST00000398000.7">
    <molecule id="Q9H7Y0-1"/>
    <property type="protein sequence ID" value="ENSP00000381086.2"/>
    <property type="gene ID" value="ENSG00000147113.17"/>
</dbReference>
<dbReference type="GeneID" id="79742"/>
<dbReference type="KEGG" id="hsa:79742"/>
<dbReference type="MANE-Select" id="ENST00000398000.7">
    <property type="protein sequence ID" value="ENSP00000381086.2"/>
    <property type="RefSeq nucleotide sequence ID" value="NM_176819.4"/>
    <property type="RefSeq protein sequence ID" value="NP_789789.2"/>
</dbReference>
<dbReference type="UCSC" id="uc004dgg.3">
    <molecule id="Q9H7Y0-1"/>
    <property type="organism name" value="human"/>
</dbReference>
<dbReference type="AGR" id="HGNC:25866"/>
<dbReference type="CTD" id="79742"/>
<dbReference type="DisGeNET" id="79742"/>
<dbReference type="GeneCards" id="DIPK2B"/>
<dbReference type="HGNC" id="HGNC:25866">
    <property type="gene designation" value="DIPK2B"/>
</dbReference>
<dbReference type="HPA" id="ENSG00000147113">
    <property type="expression patterns" value="Low tissue specificity"/>
</dbReference>
<dbReference type="MIM" id="300959">
    <property type="type" value="gene"/>
</dbReference>
<dbReference type="neXtProt" id="NX_Q9H7Y0"/>
<dbReference type="OpenTargets" id="ENSG00000147113"/>
<dbReference type="PharmGKB" id="PA134972038"/>
<dbReference type="VEuPathDB" id="HostDB:ENSG00000147113"/>
<dbReference type="eggNOG" id="ENOG502QRQX">
    <property type="taxonomic scope" value="Eukaryota"/>
</dbReference>
<dbReference type="GeneTree" id="ENSGT00520000055625"/>
<dbReference type="HOGENOM" id="CLU_051861_0_0_1"/>
<dbReference type="InParanoid" id="Q9H7Y0"/>
<dbReference type="OMA" id="TQRFQKW"/>
<dbReference type="OrthoDB" id="10035316at2759"/>
<dbReference type="PAN-GO" id="Q9H7Y0">
    <property type="GO annotations" value="0 GO annotations based on evolutionary models"/>
</dbReference>
<dbReference type="PhylomeDB" id="Q9H7Y0"/>
<dbReference type="TreeFam" id="TF353643"/>
<dbReference type="PathwayCommons" id="Q9H7Y0"/>
<dbReference type="BioGRID-ORCS" id="79742">
    <property type="hits" value="14 hits in 761 CRISPR screens"/>
</dbReference>
<dbReference type="ChiTaRS" id="CXorf36">
    <property type="organism name" value="human"/>
</dbReference>
<dbReference type="GeneWiki" id="CXorf36"/>
<dbReference type="GenomeRNAi" id="79742"/>
<dbReference type="Pharos" id="Q9H7Y0">
    <property type="development level" value="Tdark"/>
</dbReference>
<dbReference type="PRO" id="PR:Q9H7Y0"/>
<dbReference type="Proteomes" id="UP000005640">
    <property type="component" value="Chromosome X"/>
</dbReference>
<dbReference type="RNAct" id="Q9H7Y0">
    <property type="molecule type" value="protein"/>
</dbReference>
<dbReference type="Bgee" id="ENSG00000147113">
    <property type="expression patterns" value="Expressed in omental fat pad and 127 other cell types or tissues"/>
</dbReference>
<dbReference type="GO" id="GO:0005576">
    <property type="term" value="C:extracellular region"/>
    <property type="evidence" value="ECO:0007669"/>
    <property type="project" value="UniProtKB-SubCell"/>
</dbReference>
<dbReference type="InterPro" id="IPR020519">
    <property type="entry name" value="DIPK2A/B"/>
</dbReference>
<dbReference type="InterPro" id="IPR022049">
    <property type="entry name" value="FAM69_kinase_dom"/>
</dbReference>
<dbReference type="PANTHER" id="PTHR32073:SF8">
    <property type="entry name" value="DIVERGENT PROTEIN KINASE DOMAIN 2B"/>
    <property type="match status" value="1"/>
</dbReference>
<dbReference type="PANTHER" id="PTHR32073">
    <property type="entry name" value="GH11358P"/>
    <property type="match status" value="1"/>
</dbReference>
<dbReference type="Pfam" id="PF12260">
    <property type="entry name" value="PIP49_C"/>
    <property type="match status" value="1"/>
</dbReference>
<comment type="subcellular location">
    <subcellularLocation>
        <location evidence="9">Secreted</location>
    </subcellularLocation>
</comment>
<comment type="alternative products">
    <event type="alternative splicing"/>
    <isoform>
        <id>Q9H7Y0-1</id>
        <name>1</name>
        <sequence type="displayed"/>
    </isoform>
    <isoform>
        <id>Q9H7Y0-2</id>
        <name>2</name>
        <sequence type="described" ref="VSP_035633 VSP_035634"/>
    </isoform>
</comment>
<comment type="disease">
    <text evidence="4">Genetic variations in CXorf36 may be associated with susceptibility to autism.</text>
</comment>
<comment type="similarity">
    <text evidence="9">Belongs to the DIPK family.</text>
</comment>
<sequence length="433" mass="48555">MEPQLGPEAAALRPGWLALLLWVSALSCSFSLPASSLSSLVPQVRTSYNFGRTFLGLDKCNACIGTSICKKFFKEEIRSDNWLASHLGLPPDSLLSYPANYSDDSKIWRPVEIFRLVSKYQNEISDRRICASASAPKTCSIERVLRKTERFQKWLQAKRLTPDLVQGLASPLLRCPSQRLLDRVVRRYAEVADAGSIFMDHFTDRDKLRLLYTLAVNSHPILLQIFPGAEGWPLPKYLGSCGRFLVSTSTRPLQEFYDAPPDQAADLAYQLLGVLESLRSNDLNYFFYFTHIDAGMFGVFNNGHLFIRDASAVGVIDKQEGSQEANRAGENKDIFSCLVSGCQAQLPSCESISEKQSLVLVCQKLLPRLLQGRFPSPVQDDIDSILVQCGDSIRPDPEVLGAASQLKDILRPLRTCDSRFAYRYPDCKYNDKF</sequence>
<proteinExistence type="evidence at protein level"/>